<evidence type="ECO:0000250" key="1">
    <source>
        <dbReference type="UniProtKB" id="A0A0H3K9F2"/>
    </source>
</evidence>
<evidence type="ECO:0000250" key="2">
    <source>
        <dbReference type="UniProtKB" id="P11064"/>
    </source>
</evidence>
<evidence type="ECO:0000305" key="3"/>
<reference key="1">
    <citation type="journal article" date="2002" name="Lancet">
        <title>Genome and virulence determinants of high virulence community-acquired MRSA.</title>
        <authorList>
            <person name="Baba T."/>
            <person name="Takeuchi F."/>
            <person name="Kuroda M."/>
            <person name="Yuzawa H."/>
            <person name="Aoki K."/>
            <person name="Oguchi A."/>
            <person name="Nagai Y."/>
            <person name="Iwama N."/>
            <person name="Asano K."/>
            <person name="Naimi T."/>
            <person name="Kuroda H."/>
            <person name="Cui L."/>
            <person name="Yamamoto K."/>
            <person name="Hiramatsu K."/>
        </authorList>
    </citation>
    <scope>NUCLEOTIDE SEQUENCE [LARGE SCALE GENOMIC DNA]</scope>
    <source>
        <strain>MW2</strain>
    </source>
</reference>
<name>PTPA_STAAW</name>
<dbReference type="EC" id="3.1.3.48"/>
<dbReference type="EMBL" id="BA000033">
    <property type="protein sequence ID" value="BAB95686.1"/>
    <property type="molecule type" value="Genomic_DNA"/>
</dbReference>
<dbReference type="RefSeq" id="WP_000228666.1">
    <property type="nucleotide sequence ID" value="NC_003923.1"/>
</dbReference>
<dbReference type="SMR" id="Q7A0I2"/>
<dbReference type="KEGG" id="sam:MW1821"/>
<dbReference type="HOGENOM" id="CLU_071415_2_3_9"/>
<dbReference type="GO" id="GO:0005576">
    <property type="term" value="C:extracellular region"/>
    <property type="evidence" value="ECO:0007669"/>
    <property type="project" value="UniProtKB-SubCell"/>
</dbReference>
<dbReference type="GO" id="GO:0004725">
    <property type="term" value="F:protein tyrosine phosphatase activity"/>
    <property type="evidence" value="ECO:0007669"/>
    <property type="project" value="UniProtKB-EC"/>
</dbReference>
<dbReference type="CDD" id="cd16343">
    <property type="entry name" value="LMWPTP"/>
    <property type="match status" value="1"/>
</dbReference>
<dbReference type="FunFam" id="3.40.50.2300:FF:000268">
    <property type="entry name" value="Low molecular weight protein-tyrosine-phosphatase PtpA"/>
    <property type="match status" value="1"/>
</dbReference>
<dbReference type="Gene3D" id="3.40.50.2300">
    <property type="match status" value="1"/>
</dbReference>
<dbReference type="InterPro" id="IPR050438">
    <property type="entry name" value="LMW_PTPase"/>
</dbReference>
<dbReference type="InterPro" id="IPR023485">
    <property type="entry name" value="Ptyr_pPase"/>
</dbReference>
<dbReference type="InterPro" id="IPR036196">
    <property type="entry name" value="Ptyr_pPase_sf"/>
</dbReference>
<dbReference type="InterPro" id="IPR017867">
    <property type="entry name" value="Tyr_phospatase_low_mol_wt"/>
</dbReference>
<dbReference type="PANTHER" id="PTHR11717:SF7">
    <property type="entry name" value="LOW MOLECULAR WEIGHT PHOSPHOTYROSINE PROTEIN PHOSPHATASE"/>
    <property type="match status" value="1"/>
</dbReference>
<dbReference type="PANTHER" id="PTHR11717">
    <property type="entry name" value="LOW MOLECULAR WEIGHT PROTEIN TYROSINE PHOSPHATASE"/>
    <property type="match status" value="1"/>
</dbReference>
<dbReference type="Pfam" id="PF01451">
    <property type="entry name" value="LMWPc"/>
    <property type="match status" value="1"/>
</dbReference>
<dbReference type="PRINTS" id="PR00719">
    <property type="entry name" value="LMWPTPASE"/>
</dbReference>
<dbReference type="SMART" id="SM00226">
    <property type="entry name" value="LMWPc"/>
    <property type="match status" value="1"/>
</dbReference>
<dbReference type="SUPFAM" id="SSF52788">
    <property type="entry name" value="Phosphotyrosine protein phosphatases I"/>
    <property type="match status" value="1"/>
</dbReference>
<feature type="chain" id="PRO_0000300662" description="Low molecular weight protein-tyrosine-phosphatase PtpA">
    <location>
        <begin position="1"/>
        <end position="154"/>
    </location>
</feature>
<feature type="active site" description="Nucleophile" evidence="2">
    <location>
        <position position="8"/>
    </location>
</feature>
<feature type="active site" evidence="2">
    <location>
        <position position="14"/>
    </location>
</feature>
<feature type="active site" description="Proton donor" evidence="2">
    <location>
        <position position="120"/>
    </location>
</feature>
<protein>
    <recommendedName>
        <fullName>Low molecular weight protein-tyrosine-phosphatase PtpA</fullName>
        <ecNumber>3.1.3.48</ecNumber>
    </recommendedName>
    <alternativeName>
        <fullName>Phosphotyrosine phosphatase A</fullName>
        <shortName>PTPase A</shortName>
    </alternativeName>
</protein>
<organism>
    <name type="scientific">Staphylococcus aureus (strain MW2)</name>
    <dbReference type="NCBI Taxonomy" id="196620"/>
    <lineage>
        <taxon>Bacteria</taxon>
        <taxon>Bacillati</taxon>
        <taxon>Bacillota</taxon>
        <taxon>Bacilli</taxon>
        <taxon>Bacillales</taxon>
        <taxon>Staphylococcaceae</taxon>
        <taxon>Staphylococcus</taxon>
    </lineage>
</organism>
<keyword id="KW-0378">Hydrolase</keyword>
<keyword id="KW-0597">Phosphoprotein</keyword>
<keyword id="KW-0904">Protein phosphatase</keyword>
<keyword id="KW-0964">Secreted</keyword>
<comment type="function">
    <text evidence="1">Secreted tyrosine phosphatase that plays a critical role during infection as a bacterial effector protein that counteracts host defenses. Required for intramacrophage survival.</text>
</comment>
<comment type="catalytic activity">
    <reaction evidence="1">
        <text>O-phospho-L-tyrosyl-[protein] + H2O = L-tyrosyl-[protein] + phosphate</text>
        <dbReference type="Rhea" id="RHEA:10684"/>
        <dbReference type="Rhea" id="RHEA-COMP:10136"/>
        <dbReference type="Rhea" id="RHEA-COMP:20101"/>
        <dbReference type="ChEBI" id="CHEBI:15377"/>
        <dbReference type="ChEBI" id="CHEBI:43474"/>
        <dbReference type="ChEBI" id="CHEBI:46858"/>
        <dbReference type="ChEBI" id="CHEBI:61978"/>
        <dbReference type="EC" id="3.1.3.48"/>
    </reaction>
</comment>
<comment type="subunit">
    <text evidence="1">Interacts with host CORO1A.</text>
</comment>
<comment type="subcellular location">
    <subcellularLocation>
        <location evidence="1">Secreted</location>
    </subcellularLocation>
    <text evidence="1">Secreted intracellularly upon bacterial infection of macrophages.</text>
</comment>
<comment type="PTM">
    <text evidence="1">Phosphorylations at Tyr-122 and Tyr-123 are essential for phosphatase activity.</text>
</comment>
<comment type="similarity">
    <text evidence="3">Belongs to the low molecular weight phosphotyrosine protein phosphatase family.</text>
</comment>
<accession>Q7A0I2</accession>
<gene>
    <name type="primary">ptpA</name>
    <name type="ordered locus">MW1821</name>
</gene>
<sequence length="154" mass="17491">MVDVAFVCLGNICRSPMAEAIMRQRLKDRNIHDIKVHSRGTGSWNLGEPPHEGTQKILNKHNIPFDGMISELFEATDDFDYIVAMDQSNVDNIKSINPNLKGQLFKLLEFSNMEESDVPDPYYTNNFEGVYDMVLSSCDNLIDYIVKDANLKEG</sequence>
<proteinExistence type="inferred from homology"/>